<proteinExistence type="inferred from homology"/>
<feature type="chain" id="PRO_0000210358" description="Glucans biosynthesis glucosyltransferase H">
    <location>
        <begin position="1"/>
        <end position="862"/>
    </location>
</feature>
<feature type="transmembrane region" description="Helical" evidence="1">
    <location>
        <begin position="188"/>
        <end position="210"/>
    </location>
</feature>
<feature type="transmembrane region" description="Helical" evidence="1">
    <location>
        <begin position="545"/>
        <end position="567"/>
    </location>
</feature>
<feature type="transmembrane region" description="Helical" evidence="1">
    <location>
        <begin position="597"/>
        <end position="619"/>
    </location>
</feature>
<feature type="transmembrane region" description="Helical" evidence="1">
    <location>
        <begin position="626"/>
        <end position="648"/>
    </location>
</feature>
<feature type="transmembrane region" description="Helical" evidence="1">
    <location>
        <begin position="708"/>
        <end position="730"/>
    </location>
</feature>
<feature type="region of interest" description="Disordered" evidence="2">
    <location>
        <begin position="1"/>
        <end position="25"/>
    </location>
</feature>
<feature type="compositionally biased region" description="Polar residues" evidence="2">
    <location>
        <begin position="7"/>
        <end position="25"/>
    </location>
</feature>
<keyword id="KW-0997">Cell inner membrane</keyword>
<keyword id="KW-1003">Cell membrane</keyword>
<keyword id="KW-0328">Glycosyltransferase</keyword>
<keyword id="KW-0472">Membrane</keyword>
<keyword id="KW-1185">Reference proteome</keyword>
<keyword id="KW-0808">Transferase</keyword>
<keyword id="KW-0812">Transmembrane</keyword>
<keyword id="KW-1133">Transmembrane helix</keyword>
<comment type="function">
    <text evidence="1">Involved in the biosynthesis of osmoregulated periplasmic glucans (OPGs).</text>
</comment>
<comment type="pathway">
    <text evidence="1">Glycan metabolism; osmoregulated periplasmic glucan (OPG) biosynthesis.</text>
</comment>
<comment type="subcellular location">
    <subcellularLocation>
        <location evidence="1">Cell inner membrane</location>
        <topology evidence="1">Multi-pass membrane protein</topology>
    </subcellularLocation>
</comment>
<comment type="similarity">
    <text evidence="1">Belongs to the glycosyltransferase 2 family. OpgH subfamily.</text>
</comment>
<evidence type="ECO:0000255" key="1">
    <source>
        <dbReference type="HAMAP-Rule" id="MF_01072"/>
    </source>
</evidence>
<evidence type="ECO:0000256" key="2">
    <source>
        <dbReference type="SAM" id="MobiDB-lite"/>
    </source>
</evidence>
<organism>
    <name type="scientific">Ralstonia nicotianae (strain ATCC BAA-1114 / GMI1000)</name>
    <name type="common">Ralstonia solanacearum</name>
    <dbReference type="NCBI Taxonomy" id="267608"/>
    <lineage>
        <taxon>Bacteria</taxon>
        <taxon>Pseudomonadati</taxon>
        <taxon>Pseudomonadota</taxon>
        <taxon>Betaproteobacteria</taxon>
        <taxon>Burkholderiales</taxon>
        <taxon>Burkholderiaceae</taxon>
        <taxon>Ralstonia</taxon>
        <taxon>Ralstonia solanacearum species complex</taxon>
    </lineage>
</organism>
<reference key="1">
    <citation type="journal article" date="2002" name="Nature">
        <title>Genome sequence of the plant pathogen Ralstonia solanacearum.</title>
        <authorList>
            <person name="Salanoubat M."/>
            <person name="Genin S."/>
            <person name="Artiguenave F."/>
            <person name="Gouzy J."/>
            <person name="Mangenot S."/>
            <person name="Arlat M."/>
            <person name="Billault A."/>
            <person name="Brottier P."/>
            <person name="Camus J.-C."/>
            <person name="Cattolico L."/>
            <person name="Chandler M."/>
            <person name="Choisne N."/>
            <person name="Claudel-Renard C."/>
            <person name="Cunnac S."/>
            <person name="Demange N."/>
            <person name="Gaspin C."/>
            <person name="Lavie M."/>
            <person name="Moisan A."/>
            <person name="Robert C."/>
            <person name="Saurin W."/>
            <person name="Schiex T."/>
            <person name="Siguier P."/>
            <person name="Thebault P."/>
            <person name="Whalen M."/>
            <person name="Wincker P."/>
            <person name="Levy M."/>
            <person name="Weissenbach J."/>
            <person name="Boucher C.A."/>
        </authorList>
    </citation>
    <scope>NUCLEOTIDE SEQUENCE [LARGE SCALE GENOMIC DNA]</scope>
    <source>
        <strain>ATCC BAA-1114 / GMI1000</strain>
    </source>
</reference>
<accession>Q8XVC2</accession>
<name>OPGH_RALN1</name>
<dbReference type="EC" id="2.4.1.-" evidence="1"/>
<dbReference type="EMBL" id="AL646052">
    <property type="protein sequence ID" value="CAD16616.1"/>
    <property type="molecule type" value="Genomic_DNA"/>
</dbReference>
<dbReference type="RefSeq" id="WP_011002815.1">
    <property type="nucleotide sequence ID" value="NC_003295.1"/>
</dbReference>
<dbReference type="STRING" id="267608.RSc2909"/>
<dbReference type="CAZy" id="GT2">
    <property type="family name" value="Glycosyltransferase Family 2"/>
</dbReference>
<dbReference type="EnsemblBacteria" id="CAD16616">
    <property type="protein sequence ID" value="CAD16616"/>
    <property type="gene ID" value="RSc2909"/>
</dbReference>
<dbReference type="KEGG" id="rso:RSc2909"/>
<dbReference type="PATRIC" id="fig|267608.8.peg.2962"/>
<dbReference type="eggNOG" id="COG2943">
    <property type="taxonomic scope" value="Bacteria"/>
</dbReference>
<dbReference type="eggNOG" id="COG3416">
    <property type="taxonomic scope" value="Bacteria"/>
</dbReference>
<dbReference type="HOGENOM" id="CLU_015730_0_0_4"/>
<dbReference type="UniPathway" id="UPA00637"/>
<dbReference type="Proteomes" id="UP000001436">
    <property type="component" value="Chromosome"/>
</dbReference>
<dbReference type="GO" id="GO:0005886">
    <property type="term" value="C:plasma membrane"/>
    <property type="evidence" value="ECO:0007669"/>
    <property type="project" value="UniProtKB-SubCell"/>
</dbReference>
<dbReference type="GO" id="GO:0016758">
    <property type="term" value="F:hexosyltransferase activity"/>
    <property type="evidence" value="ECO:0007669"/>
    <property type="project" value="UniProtKB-UniRule"/>
</dbReference>
<dbReference type="GO" id="GO:0009250">
    <property type="term" value="P:glucan biosynthetic process"/>
    <property type="evidence" value="ECO:0007669"/>
    <property type="project" value="UniProtKB-UniRule"/>
</dbReference>
<dbReference type="CDD" id="cd04191">
    <property type="entry name" value="Glucan_BSP_MdoH"/>
    <property type="match status" value="1"/>
</dbReference>
<dbReference type="FunFam" id="3.90.550.10:FF:000047">
    <property type="entry name" value="Glucans biosynthesis glucosyltransferase H"/>
    <property type="match status" value="1"/>
</dbReference>
<dbReference type="Gene3D" id="3.90.550.10">
    <property type="entry name" value="Spore Coat Polysaccharide Biosynthesis Protein SpsA, Chain A"/>
    <property type="match status" value="1"/>
</dbReference>
<dbReference type="HAMAP" id="MF_01072">
    <property type="entry name" value="MdoH_OpgH"/>
    <property type="match status" value="1"/>
</dbReference>
<dbReference type="InterPro" id="IPR023725">
    <property type="entry name" value="Glucans_biosynth_gluTrFase_H"/>
</dbReference>
<dbReference type="InterPro" id="IPR001173">
    <property type="entry name" value="Glyco_trans_2-like"/>
</dbReference>
<dbReference type="InterPro" id="IPR050321">
    <property type="entry name" value="Glycosyltr_2/OpgH_subfam"/>
</dbReference>
<dbReference type="InterPro" id="IPR029044">
    <property type="entry name" value="Nucleotide-diphossugar_trans"/>
</dbReference>
<dbReference type="NCBIfam" id="NF003955">
    <property type="entry name" value="PRK05454.1-1"/>
    <property type="match status" value="1"/>
</dbReference>
<dbReference type="NCBIfam" id="NF003958">
    <property type="entry name" value="PRK05454.2-1"/>
    <property type="match status" value="1"/>
</dbReference>
<dbReference type="NCBIfam" id="NF003962">
    <property type="entry name" value="PRK05454.2-5"/>
    <property type="match status" value="1"/>
</dbReference>
<dbReference type="PANTHER" id="PTHR43867">
    <property type="entry name" value="CELLULOSE SYNTHASE CATALYTIC SUBUNIT A [UDP-FORMING]"/>
    <property type="match status" value="1"/>
</dbReference>
<dbReference type="PANTHER" id="PTHR43867:SF5">
    <property type="entry name" value="GLUCANS BIOSYNTHESIS GLUCOSYLTRANSFERASE H"/>
    <property type="match status" value="1"/>
</dbReference>
<dbReference type="Pfam" id="PF00535">
    <property type="entry name" value="Glycos_transf_2"/>
    <property type="match status" value="1"/>
</dbReference>
<dbReference type="SUPFAM" id="SSF53448">
    <property type="entry name" value="Nucleotide-diphospho-sugar transferases"/>
    <property type="match status" value="1"/>
</dbReference>
<sequence length="862" mass="95447">MELPATSGLNAQPGNAEGTTASTRPATALSVAERYLEALPLPAEARAALRREAGIEPADKDAVALAKLHRALARLDAAQTASIEGSVPAYASIGSRLDAAYGTPHAGTATPEPAPPLEHDTAGRIHLDTGPEPARRSMVPWPWVLGPIWRARRAIGRLFSGGTAPVPYEQPDSPDPKGIWRFVGARRRLTLLALMIAQTVAATWAMSSVLPYHGHDWLEAIIIALFALLFCWVSAGFWTAITGFLLLAFHGDRFVISRRAAPNAPIPDDARTAIVMPICNEDVQRVFAGLRATYESLQRTGHLEHFDFFVLSDSGDPDIRTAEADAWLHVCRALDGFGRVFYRWRRHRVKRKSGNIDDFCRRWGGRYRYMIVLDADSVMSGDCLTRLVQLMEGAPSAGIIQTAPLAAGRDTLYARIQQFATRVYGPLFTAGLHYWQLGESHYWGHNAIIRLEPFIKHCALAPIPGKGSLSGEIMSHDFVEAALMRRAGWAVWIAYDLDGSYEEMPPNLLDELGRDRRWCHGNLMNFRLFGSPGFHPVHRAVFVTGVMAYLSAPLWFLFLLLSTALLAKHTLIAPEYFTQPRQLFPIWPEWHPEKAAALFSATATVLFLPKILSVLVLWAKGPRRFGGAVHLALSMVIEAVFSVLAAPVRMLFHTRFVTAAFLGWKVHWKSPPRDDAQTHWGDAVRRHGLHTLLGLGWAALVYWLNPSFLWWLSPVVGALIVSILLSVFSSRVTLGRGMRRWRLFMIPEEVRPPRELRAMRKHLRQAPPTPDFRLAVVDPVTNALMCAIGTARFPHDPKLLEVRDATVLQALAAGPDKLTSKQKLVLLSDPLALSALHLAVWSSDVHRAAWLPANALASKAAA</sequence>
<protein>
    <recommendedName>
        <fullName evidence="1">Glucans biosynthesis glucosyltransferase H</fullName>
        <ecNumber evidence="1">2.4.1.-</ecNumber>
    </recommendedName>
</protein>
<gene>
    <name evidence="1" type="primary">opgH</name>
    <name type="synonym">mdoH</name>
    <name type="ordered locus">RSc2909</name>
    <name type="ORF">RS00341</name>
</gene>